<sequence>MGDRVTVGIVGASGYGGVQLVRLLLEHPKVDIVYLGGEGSAGRPYTELYPHLQGRVNLTVEPVSVEVIRDRAQVVFLSLPNGIACQLAPQLLEQGCKVLDLSADYRFQDLQTYTQWYGEPREDQATAQKAVYGLPELYRDRIRQSALIGCPGCYPTASLLALAPLMKQGLIEPNTAIIDAKSGTSGGGRQGKINLLLAEADNSLAPYNVARHRHTPEIEAICSDLAGQSVLVQFTPHLVPMPRGILATVYATLRDPGLVREDLITIYQAFYRHSPWVNILPPGLYPQTKWAWGTNACFIGIEVDERTGRVIVMSAIDNLMKGQASQAVQCLNLMMGWPETMGLPQVAFYP</sequence>
<feature type="chain" id="PRO_0000112462" description="N-acetyl-gamma-glutamyl-phosphate reductase">
    <location>
        <begin position="1"/>
        <end position="350"/>
    </location>
</feature>
<feature type="active site" evidence="1">
    <location>
        <position position="153"/>
    </location>
</feature>
<organism>
    <name type="scientific">Thermosynechococcus vestitus (strain NIES-2133 / IAM M-273 / BP-1)</name>
    <dbReference type="NCBI Taxonomy" id="197221"/>
    <lineage>
        <taxon>Bacteria</taxon>
        <taxon>Bacillati</taxon>
        <taxon>Cyanobacteriota</taxon>
        <taxon>Cyanophyceae</taxon>
        <taxon>Acaryochloridales</taxon>
        <taxon>Thermosynechococcaceae</taxon>
        <taxon>Thermosynechococcus</taxon>
    </lineage>
</organism>
<protein>
    <recommendedName>
        <fullName evidence="1">N-acetyl-gamma-glutamyl-phosphate reductase</fullName>
        <shortName evidence="1">AGPR</shortName>
        <ecNumber evidence="1">1.2.1.38</ecNumber>
    </recommendedName>
    <alternativeName>
        <fullName evidence="1">N-acetyl-glutamate semialdehyde dehydrogenase</fullName>
        <shortName evidence="1">NAGSA dehydrogenase</shortName>
    </alternativeName>
</protein>
<proteinExistence type="inferred from homology"/>
<keyword id="KW-0028">Amino-acid biosynthesis</keyword>
<keyword id="KW-0055">Arginine biosynthesis</keyword>
<keyword id="KW-0963">Cytoplasm</keyword>
<keyword id="KW-0521">NADP</keyword>
<keyword id="KW-0560">Oxidoreductase</keyword>
<keyword id="KW-1185">Reference proteome</keyword>
<accession>P59312</accession>
<reference key="1">
    <citation type="journal article" date="2002" name="DNA Res.">
        <title>Complete genome structure of the thermophilic cyanobacterium Thermosynechococcus elongatus BP-1.</title>
        <authorList>
            <person name="Nakamura Y."/>
            <person name="Kaneko T."/>
            <person name="Sato S."/>
            <person name="Ikeuchi M."/>
            <person name="Katoh H."/>
            <person name="Sasamoto S."/>
            <person name="Watanabe A."/>
            <person name="Iriguchi M."/>
            <person name="Kawashima K."/>
            <person name="Kimura T."/>
            <person name="Kishida Y."/>
            <person name="Kiyokawa C."/>
            <person name="Kohara M."/>
            <person name="Matsumoto M."/>
            <person name="Matsuno A."/>
            <person name="Nakazaki N."/>
            <person name="Shimpo S."/>
            <person name="Sugimoto M."/>
            <person name="Takeuchi C."/>
            <person name="Yamada M."/>
            <person name="Tabata S."/>
        </authorList>
    </citation>
    <scope>NUCLEOTIDE SEQUENCE [LARGE SCALE GENOMIC DNA]</scope>
    <source>
        <strain>NIES-2133 / IAM M-273 / BP-1</strain>
    </source>
</reference>
<dbReference type="EC" id="1.2.1.38" evidence="1"/>
<dbReference type="EMBL" id="BA000039">
    <property type="protein sequence ID" value="BAC09771.1"/>
    <property type="molecule type" value="Genomic_DNA"/>
</dbReference>
<dbReference type="RefSeq" id="NP_683009.1">
    <property type="nucleotide sequence ID" value="NC_004113.1"/>
</dbReference>
<dbReference type="RefSeq" id="WP_011058053.1">
    <property type="nucleotide sequence ID" value="NC_004113.1"/>
</dbReference>
<dbReference type="SMR" id="P59312"/>
<dbReference type="STRING" id="197221.gene:10748830"/>
<dbReference type="EnsemblBacteria" id="BAC09771">
    <property type="protein sequence ID" value="BAC09771"/>
    <property type="gene ID" value="BAC09771"/>
</dbReference>
<dbReference type="KEGG" id="tel:tll2219"/>
<dbReference type="PATRIC" id="fig|197221.4.peg.2327"/>
<dbReference type="eggNOG" id="COG0002">
    <property type="taxonomic scope" value="Bacteria"/>
</dbReference>
<dbReference type="UniPathway" id="UPA00068">
    <property type="reaction ID" value="UER00108"/>
</dbReference>
<dbReference type="Proteomes" id="UP000000440">
    <property type="component" value="Chromosome"/>
</dbReference>
<dbReference type="GO" id="GO:0005737">
    <property type="term" value="C:cytoplasm"/>
    <property type="evidence" value="ECO:0007669"/>
    <property type="project" value="UniProtKB-SubCell"/>
</dbReference>
<dbReference type="GO" id="GO:0003942">
    <property type="term" value="F:N-acetyl-gamma-glutamyl-phosphate reductase activity"/>
    <property type="evidence" value="ECO:0007669"/>
    <property type="project" value="UniProtKB-UniRule"/>
</dbReference>
<dbReference type="GO" id="GO:0051287">
    <property type="term" value="F:NAD binding"/>
    <property type="evidence" value="ECO:0007669"/>
    <property type="project" value="InterPro"/>
</dbReference>
<dbReference type="GO" id="GO:0070401">
    <property type="term" value="F:NADP+ binding"/>
    <property type="evidence" value="ECO:0007669"/>
    <property type="project" value="InterPro"/>
</dbReference>
<dbReference type="GO" id="GO:0006526">
    <property type="term" value="P:L-arginine biosynthetic process"/>
    <property type="evidence" value="ECO:0007669"/>
    <property type="project" value="UniProtKB-UniRule"/>
</dbReference>
<dbReference type="CDD" id="cd23934">
    <property type="entry name" value="AGPR_1_C"/>
    <property type="match status" value="1"/>
</dbReference>
<dbReference type="CDD" id="cd17895">
    <property type="entry name" value="AGPR_1_N"/>
    <property type="match status" value="1"/>
</dbReference>
<dbReference type="FunFam" id="3.30.360.10:FF:000014">
    <property type="entry name" value="N-acetyl-gamma-glutamyl-phosphate reductase"/>
    <property type="match status" value="1"/>
</dbReference>
<dbReference type="Gene3D" id="3.30.360.10">
    <property type="entry name" value="Dihydrodipicolinate Reductase, domain 2"/>
    <property type="match status" value="1"/>
</dbReference>
<dbReference type="Gene3D" id="3.40.50.720">
    <property type="entry name" value="NAD(P)-binding Rossmann-like Domain"/>
    <property type="match status" value="1"/>
</dbReference>
<dbReference type="HAMAP" id="MF_00150">
    <property type="entry name" value="ArgC_type1"/>
    <property type="match status" value="1"/>
</dbReference>
<dbReference type="InterPro" id="IPR023013">
    <property type="entry name" value="AGPR_AS"/>
</dbReference>
<dbReference type="InterPro" id="IPR000706">
    <property type="entry name" value="AGPR_type-1"/>
</dbReference>
<dbReference type="InterPro" id="IPR036291">
    <property type="entry name" value="NAD(P)-bd_dom_sf"/>
</dbReference>
<dbReference type="InterPro" id="IPR050085">
    <property type="entry name" value="NAGSA_dehydrogenase"/>
</dbReference>
<dbReference type="InterPro" id="IPR000534">
    <property type="entry name" value="Semialdehyde_DH_NAD-bd"/>
</dbReference>
<dbReference type="NCBIfam" id="TIGR01850">
    <property type="entry name" value="argC"/>
    <property type="match status" value="1"/>
</dbReference>
<dbReference type="PANTHER" id="PTHR32338:SF10">
    <property type="entry name" value="N-ACETYL-GAMMA-GLUTAMYL-PHOSPHATE REDUCTASE, CHLOROPLASTIC-RELATED"/>
    <property type="match status" value="1"/>
</dbReference>
<dbReference type="PANTHER" id="PTHR32338">
    <property type="entry name" value="N-ACETYL-GAMMA-GLUTAMYL-PHOSPHATE REDUCTASE, CHLOROPLASTIC-RELATED-RELATED"/>
    <property type="match status" value="1"/>
</dbReference>
<dbReference type="Pfam" id="PF01118">
    <property type="entry name" value="Semialdhyde_dh"/>
    <property type="match status" value="1"/>
</dbReference>
<dbReference type="Pfam" id="PF22698">
    <property type="entry name" value="Semialdhyde_dhC_1"/>
    <property type="match status" value="1"/>
</dbReference>
<dbReference type="SMART" id="SM00859">
    <property type="entry name" value="Semialdhyde_dh"/>
    <property type="match status" value="1"/>
</dbReference>
<dbReference type="SUPFAM" id="SSF55347">
    <property type="entry name" value="Glyceraldehyde-3-phosphate dehydrogenase-like, C-terminal domain"/>
    <property type="match status" value="1"/>
</dbReference>
<dbReference type="SUPFAM" id="SSF51735">
    <property type="entry name" value="NAD(P)-binding Rossmann-fold domains"/>
    <property type="match status" value="1"/>
</dbReference>
<dbReference type="PROSITE" id="PS01224">
    <property type="entry name" value="ARGC"/>
    <property type="match status" value="1"/>
</dbReference>
<comment type="function">
    <text evidence="1">Catalyzes the NADPH-dependent reduction of N-acetyl-5-glutamyl phosphate to yield N-acetyl-L-glutamate 5-semialdehyde.</text>
</comment>
<comment type="catalytic activity">
    <reaction evidence="1">
        <text>N-acetyl-L-glutamate 5-semialdehyde + phosphate + NADP(+) = N-acetyl-L-glutamyl 5-phosphate + NADPH + H(+)</text>
        <dbReference type="Rhea" id="RHEA:21588"/>
        <dbReference type="ChEBI" id="CHEBI:15378"/>
        <dbReference type="ChEBI" id="CHEBI:29123"/>
        <dbReference type="ChEBI" id="CHEBI:43474"/>
        <dbReference type="ChEBI" id="CHEBI:57783"/>
        <dbReference type="ChEBI" id="CHEBI:57936"/>
        <dbReference type="ChEBI" id="CHEBI:58349"/>
        <dbReference type="EC" id="1.2.1.38"/>
    </reaction>
</comment>
<comment type="pathway">
    <text evidence="1">Amino-acid biosynthesis; L-arginine biosynthesis; N(2)-acetyl-L-ornithine from L-glutamate: step 3/4.</text>
</comment>
<comment type="subcellular location">
    <subcellularLocation>
        <location evidence="1">Cytoplasm</location>
    </subcellularLocation>
</comment>
<comment type="similarity">
    <text evidence="1">Belongs to the NAGSA dehydrogenase family. Type 1 subfamily.</text>
</comment>
<name>ARGC_THEVB</name>
<gene>
    <name evidence="1" type="primary">argC</name>
    <name type="ordered locus">tll2219</name>
</gene>
<evidence type="ECO:0000255" key="1">
    <source>
        <dbReference type="HAMAP-Rule" id="MF_00150"/>
    </source>
</evidence>